<gene>
    <name evidence="5" type="primary">RTA1</name>
</gene>
<reference key="1">
    <citation type="journal article" date="2008" name="PLoS Pathog.">
        <title>Histoplasma requires SID1, a member of an iron-regulated siderophore gene cluster, for host colonization.</title>
        <authorList>
            <person name="Hwang L.H."/>
            <person name="Mayfield J.A."/>
            <person name="Rine J."/>
            <person name="Sil A."/>
        </authorList>
    </citation>
    <scope>NUCLEOTIDE SEQUENCE [GENOMIC DNA]</scope>
    <scope>FUNCTION</scope>
    <scope>INDUCTION</scope>
    <source>
        <strain>ATCC 26032 / G217B</strain>
    </source>
</reference>
<organism>
    <name type="scientific">Ajellomyces capsulatus</name>
    <name type="common">Darling's disease fungus</name>
    <name type="synonym">Histoplasma capsulatum</name>
    <dbReference type="NCBI Taxonomy" id="5037"/>
    <lineage>
        <taxon>Eukaryota</taxon>
        <taxon>Fungi</taxon>
        <taxon>Dikarya</taxon>
        <taxon>Ascomycota</taxon>
        <taxon>Pezizomycotina</taxon>
        <taxon>Eurotiomycetes</taxon>
        <taxon>Eurotiomycetidae</taxon>
        <taxon>Onygenales</taxon>
        <taxon>Ajellomycetaceae</taxon>
        <taxon>Histoplasma</taxon>
    </lineage>
</organism>
<keyword id="KW-0325">Glycoprotein</keyword>
<keyword id="KW-0472">Membrane</keyword>
<keyword id="KW-0812">Transmembrane</keyword>
<keyword id="KW-1133">Transmembrane helix</keyword>
<comment type="function">
    <text evidence="4">Lipid-translocating exporter-like protein; part of the gene cluster that mediates the biosynthesis of hydroxamate-containing siderophores that play a critical role in virulence via intracellular iron acquisition during macrophage infection (PubMed:18404210).</text>
</comment>
<comment type="pathway">
    <text evidence="7">Siderophore biosynthesis.</text>
</comment>
<comment type="subcellular location">
    <subcellularLocation>
        <location evidence="1">Membrane</location>
        <topology evidence="1">Multi-pass membrane protein</topology>
    </subcellularLocation>
</comment>
<comment type="induction">
    <text evidence="4">Expression seems not to be induced during iron deprivation (PubMed:18404210).</text>
</comment>
<comment type="similarity">
    <text evidence="6">Belongs to the lipid-translocating exporter (LTE) (TC 9.A.26.1) family.</text>
</comment>
<sequence>MSPESKKITAHGSTSMPLSRTSKPQKFTIPLTVGAIFSVIGFLQRFFLASGKGDVQSLYTLSTMFILGAGPTYAGADYFICGRLFSFVPSAAPMSPIRVVRTFITFDVLAEVCVWTGAGLLAGAHTDTAARYKIGLNLIRAAMITQAFLFTSFVAILASFHVRVCALRAEWSVTSNGGTGRRFMMVVHSLYASSIFIIIRSAYHIAGHSFRTNEQPFLICEASLMLLNTAMFNVFHPGHILPIDSRVYVGIDGQERANETIEGAFTDSRPLLQKILDPLDVKGLFSRDKKRWHDPTAELEMDINSTLYAALT</sequence>
<accession>B2KWI0</accession>
<feature type="chain" id="PRO_0000444419" description="Lipid-translocating exporter-like protein RTA1">
    <location>
        <begin position="1"/>
        <end position="312"/>
    </location>
</feature>
<feature type="transmembrane region" description="Helical" evidence="1">
    <location>
        <begin position="29"/>
        <end position="49"/>
    </location>
</feature>
<feature type="transmembrane region" description="Helical" evidence="1">
    <location>
        <begin position="61"/>
        <end position="81"/>
    </location>
</feature>
<feature type="transmembrane region" description="Helical" evidence="1">
    <location>
        <begin position="103"/>
        <end position="123"/>
    </location>
</feature>
<feature type="transmembrane region" description="Helical" evidence="1">
    <location>
        <begin position="142"/>
        <end position="162"/>
    </location>
</feature>
<feature type="transmembrane region" description="Helical" evidence="1">
    <location>
        <begin position="183"/>
        <end position="203"/>
    </location>
</feature>
<feature type="transmembrane region" description="Helical" evidence="1">
    <location>
        <begin position="223"/>
        <end position="243"/>
    </location>
</feature>
<feature type="region of interest" description="Disordered" evidence="3">
    <location>
        <begin position="1"/>
        <end position="21"/>
    </location>
</feature>
<feature type="compositionally biased region" description="Polar residues" evidence="3">
    <location>
        <begin position="11"/>
        <end position="21"/>
    </location>
</feature>
<feature type="glycosylation site" description="N-linked (GlcNAc...) asparagine" evidence="2">
    <location>
        <position position="258"/>
    </location>
</feature>
<feature type="glycosylation site" description="N-linked (GlcNAc...) asparagine" evidence="2">
    <location>
        <position position="304"/>
    </location>
</feature>
<evidence type="ECO:0000255" key="1"/>
<evidence type="ECO:0000255" key="2">
    <source>
        <dbReference type="PROSITE-ProRule" id="PRU00498"/>
    </source>
</evidence>
<evidence type="ECO:0000256" key="3">
    <source>
        <dbReference type="SAM" id="MobiDB-lite"/>
    </source>
</evidence>
<evidence type="ECO:0000269" key="4">
    <source>
    </source>
</evidence>
<evidence type="ECO:0000303" key="5">
    <source>
    </source>
</evidence>
<evidence type="ECO:0000305" key="6"/>
<evidence type="ECO:0000305" key="7">
    <source>
    </source>
</evidence>
<dbReference type="EMBL" id="EU253975">
    <property type="protein sequence ID" value="ACC64453.1"/>
    <property type="molecule type" value="Genomic_DNA"/>
</dbReference>
<dbReference type="SMR" id="B2KWI0"/>
<dbReference type="GlyCosmos" id="B2KWI0">
    <property type="glycosylation" value="2 sites, No reported glycans"/>
</dbReference>
<dbReference type="GO" id="GO:0016020">
    <property type="term" value="C:membrane"/>
    <property type="evidence" value="ECO:0007669"/>
    <property type="project" value="UniProtKB-SubCell"/>
</dbReference>
<dbReference type="InterPro" id="IPR007568">
    <property type="entry name" value="RTA1"/>
</dbReference>
<dbReference type="PANTHER" id="PTHR31465">
    <property type="entry name" value="PROTEIN RTA1-RELATED"/>
    <property type="match status" value="1"/>
</dbReference>
<dbReference type="PANTHER" id="PTHR31465:SF13">
    <property type="entry name" value="RTA1 DOMAIN PROTEIN-RELATED"/>
    <property type="match status" value="1"/>
</dbReference>
<dbReference type="Pfam" id="PF04479">
    <property type="entry name" value="RTA1"/>
    <property type="match status" value="1"/>
</dbReference>
<name>RTA1_AJECA</name>
<protein>
    <recommendedName>
        <fullName evidence="7">Lipid-translocating exporter-like protein RTA1</fullName>
    </recommendedName>
    <alternativeName>
        <fullName evidence="5">Siderophore biosynthesis cluster protein RTA1</fullName>
    </alternativeName>
</protein>
<proteinExistence type="evidence at transcript level"/>